<accession>Q01QR3</accession>
<protein>
    <recommendedName>
        <fullName evidence="1">Peptidyl-tRNA hydrolase</fullName>
        <shortName evidence="1">Pth</shortName>
        <ecNumber evidence="1">3.1.1.29</ecNumber>
    </recommendedName>
</protein>
<reference key="1">
    <citation type="journal article" date="2009" name="Appl. Environ. Microbiol.">
        <title>Three genomes from the phylum Acidobacteria provide insight into the lifestyles of these microorganisms in soils.</title>
        <authorList>
            <person name="Ward N.L."/>
            <person name="Challacombe J.F."/>
            <person name="Janssen P.H."/>
            <person name="Henrissat B."/>
            <person name="Coutinho P.M."/>
            <person name="Wu M."/>
            <person name="Xie G."/>
            <person name="Haft D.H."/>
            <person name="Sait M."/>
            <person name="Badger J."/>
            <person name="Barabote R.D."/>
            <person name="Bradley B."/>
            <person name="Brettin T.S."/>
            <person name="Brinkac L.M."/>
            <person name="Bruce D."/>
            <person name="Creasy T."/>
            <person name="Daugherty S.C."/>
            <person name="Davidsen T.M."/>
            <person name="DeBoy R.T."/>
            <person name="Detter J.C."/>
            <person name="Dodson R.J."/>
            <person name="Durkin A.S."/>
            <person name="Ganapathy A."/>
            <person name="Gwinn-Giglio M."/>
            <person name="Han C.S."/>
            <person name="Khouri H."/>
            <person name="Kiss H."/>
            <person name="Kothari S.P."/>
            <person name="Madupu R."/>
            <person name="Nelson K.E."/>
            <person name="Nelson W.C."/>
            <person name="Paulsen I."/>
            <person name="Penn K."/>
            <person name="Ren Q."/>
            <person name="Rosovitz M.J."/>
            <person name="Selengut J.D."/>
            <person name="Shrivastava S."/>
            <person name="Sullivan S.A."/>
            <person name="Tapia R."/>
            <person name="Thompson L.S."/>
            <person name="Watkins K.L."/>
            <person name="Yang Q."/>
            <person name="Yu C."/>
            <person name="Zafar N."/>
            <person name="Zhou L."/>
            <person name="Kuske C.R."/>
        </authorList>
    </citation>
    <scope>NUCLEOTIDE SEQUENCE [LARGE SCALE GENOMIC DNA]</scope>
    <source>
        <strain>Ellin6076</strain>
    </source>
</reference>
<keyword id="KW-0963">Cytoplasm</keyword>
<keyword id="KW-0378">Hydrolase</keyword>
<keyword id="KW-0694">RNA-binding</keyword>
<keyword id="KW-0820">tRNA-binding</keyword>
<name>PTH_SOLUE</name>
<evidence type="ECO:0000255" key="1">
    <source>
        <dbReference type="HAMAP-Rule" id="MF_00083"/>
    </source>
</evidence>
<feature type="chain" id="PRO_1000092987" description="Peptidyl-tRNA hydrolase">
    <location>
        <begin position="1"/>
        <end position="196"/>
    </location>
</feature>
<feature type="active site" description="Proton acceptor" evidence="1">
    <location>
        <position position="19"/>
    </location>
</feature>
<feature type="binding site" evidence="1">
    <location>
        <position position="14"/>
    </location>
    <ligand>
        <name>tRNA</name>
        <dbReference type="ChEBI" id="CHEBI:17843"/>
    </ligand>
</feature>
<feature type="binding site" evidence="1">
    <location>
        <position position="64"/>
    </location>
    <ligand>
        <name>tRNA</name>
        <dbReference type="ChEBI" id="CHEBI:17843"/>
    </ligand>
</feature>
<feature type="binding site" evidence="1">
    <location>
        <position position="66"/>
    </location>
    <ligand>
        <name>tRNA</name>
        <dbReference type="ChEBI" id="CHEBI:17843"/>
    </ligand>
</feature>
<feature type="binding site" evidence="1">
    <location>
        <position position="112"/>
    </location>
    <ligand>
        <name>tRNA</name>
        <dbReference type="ChEBI" id="CHEBI:17843"/>
    </ligand>
</feature>
<feature type="site" description="Discriminates between blocked and unblocked aminoacyl-tRNA" evidence="1">
    <location>
        <position position="9"/>
    </location>
</feature>
<feature type="site" description="Stabilizes the basic form of H active site to accept a proton" evidence="1">
    <location>
        <position position="91"/>
    </location>
</feature>
<proteinExistence type="inferred from homology"/>
<comment type="function">
    <text evidence="1">Hydrolyzes ribosome-free peptidyl-tRNAs (with 1 or more amino acids incorporated), which drop off the ribosome during protein synthesis, or as a result of ribosome stalling.</text>
</comment>
<comment type="function">
    <text evidence="1">Catalyzes the release of premature peptidyl moieties from peptidyl-tRNA molecules trapped in stalled 50S ribosomal subunits, and thus maintains levels of free tRNAs and 50S ribosomes.</text>
</comment>
<comment type="catalytic activity">
    <reaction evidence="1">
        <text>an N-acyl-L-alpha-aminoacyl-tRNA + H2O = an N-acyl-L-amino acid + a tRNA + H(+)</text>
        <dbReference type="Rhea" id="RHEA:54448"/>
        <dbReference type="Rhea" id="RHEA-COMP:10123"/>
        <dbReference type="Rhea" id="RHEA-COMP:13883"/>
        <dbReference type="ChEBI" id="CHEBI:15377"/>
        <dbReference type="ChEBI" id="CHEBI:15378"/>
        <dbReference type="ChEBI" id="CHEBI:59874"/>
        <dbReference type="ChEBI" id="CHEBI:78442"/>
        <dbReference type="ChEBI" id="CHEBI:138191"/>
        <dbReference type="EC" id="3.1.1.29"/>
    </reaction>
</comment>
<comment type="subunit">
    <text evidence="1">Monomer.</text>
</comment>
<comment type="subcellular location">
    <subcellularLocation>
        <location evidence="1">Cytoplasm</location>
    </subcellularLocation>
</comment>
<comment type="similarity">
    <text evidence="1">Belongs to the PTH family.</text>
</comment>
<organism>
    <name type="scientific">Solibacter usitatus (strain Ellin6076)</name>
    <dbReference type="NCBI Taxonomy" id="234267"/>
    <lineage>
        <taxon>Bacteria</taxon>
        <taxon>Pseudomonadati</taxon>
        <taxon>Acidobacteriota</taxon>
        <taxon>Terriglobia</taxon>
        <taxon>Bryobacterales</taxon>
        <taxon>Solibacteraceae</taxon>
        <taxon>Candidatus Solibacter</taxon>
    </lineage>
</organism>
<gene>
    <name evidence="1" type="primary">pth</name>
    <name type="ordered locus">Acid_7094</name>
</gene>
<sequence length="196" mass="21511">MFLLAGLGNPGEQYALSPHNLGFLVVDRLAEQFGIRVTRKDSKALIGLGEIDGHQVMLAKPQTFMNLSGESLAPLMEKHQIEISNLVVIYDELDLPWGALKIKPKGSAAGHNGMKSVIQWFKTSEIVRVRLGIHPGHPIRSGAEFVLAPIKRSQMKELDEFVGFAADAVRTITAEGVEKAMTKFNRRAPGLNNEEA</sequence>
<dbReference type="EC" id="3.1.1.29" evidence="1"/>
<dbReference type="EMBL" id="CP000473">
    <property type="protein sequence ID" value="ABJ88007.1"/>
    <property type="molecule type" value="Genomic_DNA"/>
</dbReference>
<dbReference type="SMR" id="Q01QR3"/>
<dbReference type="FunCoup" id="Q01QR3">
    <property type="interactions" value="437"/>
</dbReference>
<dbReference type="STRING" id="234267.Acid_7094"/>
<dbReference type="KEGG" id="sus:Acid_7094"/>
<dbReference type="eggNOG" id="COG0193">
    <property type="taxonomic scope" value="Bacteria"/>
</dbReference>
<dbReference type="HOGENOM" id="CLU_062456_4_1_0"/>
<dbReference type="InParanoid" id="Q01QR3"/>
<dbReference type="OrthoDB" id="9800507at2"/>
<dbReference type="GO" id="GO:0005737">
    <property type="term" value="C:cytoplasm"/>
    <property type="evidence" value="ECO:0007669"/>
    <property type="project" value="UniProtKB-SubCell"/>
</dbReference>
<dbReference type="GO" id="GO:0004045">
    <property type="term" value="F:peptidyl-tRNA hydrolase activity"/>
    <property type="evidence" value="ECO:0007669"/>
    <property type="project" value="UniProtKB-UniRule"/>
</dbReference>
<dbReference type="GO" id="GO:0000049">
    <property type="term" value="F:tRNA binding"/>
    <property type="evidence" value="ECO:0007669"/>
    <property type="project" value="UniProtKB-UniRule"/>
</dbReference>
<dbReference type="GO" id="GO:0006515">
    <property type="term" value="P:protein quality control for misfolded or incompletely synthesized proteins"/>
    <property type="evidence" value="ECO:0007669"/>
    <property type="project" value="UniProtKB-UniRule"/>
</dbReference>
<dbReference type="GO" id="GO:0072344">
    <property type="term" value="P:rescue of stalled ribosome"/>
    <property type="evidence" value="ECO:0007669"/>
    <property type="project" value="UniProtKB-UniRule"/>
</dbReference>
<dbReference type="CDD" id="cd00462">
    <property type="entry name" value="PTH"/>
    <property type="match status" value="1"/>
</dbReference>
<dbReference type="FunFam" id="3.40.50.1470:FF:000001">
    <property type="entry name" value="Peptidyl-tRNA hydrolase"/>
    <property type="match status" value="1"/>
</dbReference>
<dbReference type="Gene3D" id="3.40.50.1470">
    <property type="entry name" value="Peptidyl-tRNA hydrolase"/>
    <property type="match status" value="1"/>
</dbReference>
<dbReference type="HAMAP" id="MF_00083">
    <property type="entry name" value="Pept_tRNA_hydro_bact"/>
    <property type="match status" value="1"/>
</dbReference>
<dbReference type="InterPro" id="IPR001328">
    <property type="entry name" value="Pept_tRNA_hydro"/>
</dbReference>
<dbReference type="InterPro" id="IPR018171">
    <property type="entry name" value="Pept_tRNA_hydro_CS"/>
</dbReference>
<dbReference type="InterPro" id="IPR036416">
    <property type="entry name" value="Pept_tRNA_hydro_sf"/>
</dbReference>
<dbReference type="NCBIfam" id="TIGR00447">
    <property type="entry name" value="pth"/>
    <property type="match status" value="1"/>
</dbReference>
<dbReference type="PANTHER" id="PTHR17224">
    <property type="entry name" value="PEPTIDYL-TRNA HYDROLASE"/>
    <property type="match status" value="1"/>
</dbReference>
<dbReference type="PANTHER" id="PTHR17224:SF1">
    <property type="entry name" value="PEPTIDYL-TRNA HYDROLASE"/>
    <property type="match status" value="1"/>
</dbReference>
<dbReference type="Pfam" id="PF01195">
    <property type="entry name" value="Pept_tRNA_hydro"/>
    <property type="match status" value="1"/>
</dbReference>
<dbReference type="SUPFAM" id="SSF53178">
    <property type="entry name" value="Peptidyl-tRNA hydrolase-like"/>
    <property type="match status" value="1"/>
</dbReference>
<dbReference type="PROSITE" id="PS01196">
    <property type="entry name" value="PEPT_TRNA_HYDROL_2"/>
    <property type="match status" value="1"/>
</dbReference>